<accession>Q8XCQ5</accession>
<accession>Q7ABY5</accession>
<evidence type="ECO:0000255" key="1">
    <source>
        <dbReference type="HAMAP-Rule" id="MF_01623"/>
    </source>
</evidence>
<evidence type="ECO:0000256" key="2">
    <source>
        <dbReference type="SAM" id="MobiDB-lite"/>
    </source>
</evidence>
<comment type="function">
    <text evidence="1">Murein endopeptidase that cleaves the D-alanyl-meso-2,6-diamino-pimelyl amide bond that connects peptidoglycan strands. Likely plays a role in the removal of murein from the sacculus.</text>
</comment>
<comment type="cofactor">
    <cofactor evidence="1">
        <name>Zn(2+)</name>
        <dbReference type="ChEBI" id="CHEBI:29105"/>
    </cofactor>
    <text evidence="1">Binds 2 Zn(2+) ions per subunit. Zn(2+) ion 1 is bound in the active site. Zn(2+) ion 2 is bound at the dimer interface by residues from both subunits.</text>
</comment>
<comment type="subunit">
    <text evidence="1">Dimer.</text>
</comment>
<comment type="subcellular location">
    <subcellularLocation>
        <location evidence="1">Periplasm</location>
    </subcellularLocation>
</comment>
<comment type="similarity">
    <text evidence="1">Belongs to the peptidase M74 family.</text>
</comment>
<organism>
    <name type="scientific">Escherichia coli O157:H7</name>
    <dbReference type="NCBI Taxonomy" id="83334"/>
    <lineage>
        <taxon>Bacteria</taxon>
        <taxon>Pseudomonadati</taxon>
        <taxon>Pseudomonadota</taxon>
        <taxon>Gammaproteobacteria</taxon>
        <taxon>Enterobacterales</taxon>
        <taxon>Enterobacteriaceae</taxon>
        <taxon>Escherichia</taxon>
    </lineage>
</organism>
<sequence length="274" mass="30145">MNKTAIALLALLASSVSLAATPWQKITQPVPGSAQSIGSFSNGCIVGADTLPIQSEHYQVMRTDQRRYFGHPDLVMFIQRLSSQVSNLGMGTVLIGDMGMPAGGRFNGGHASHQTGLDVDIFLQLPKTRRTSAQLLRPQALDLVSRDGKHVVSTLWKPEIFSLIKLAAQDKDVTRIFVNPAIKQQLCLDAGTDRDWLRKVRPWFQHRAHMHVRLRCPADSLECEDQPLPPPGDGCGAELQSWFEPPKPGTTKPEKKTPPPLPPSCQALLDEHVI</sequence>
<protein>
    <recommendedName>
        <fullName evidence="1">Penicillin-insensitive murein endopeptidase</fullName>
        <ecNumber evidence="1">3.4.24.-</ecNumber>
    </recommendedName>
    <alternativeName>
        <fullName evidence="1">D-alanyl-D-alanine-endopeptidase</fullName>
        <shortName evidence="1">DD-endopeptidase</shortName>
    </alternativeName>
</protein>
<gene>
    <name evidence="1" type="primary">mepA</name>
    <name type="ordered locus">Z3591</name>
    <name type="ordered locus">ECs3212</name>
</gene>
<feature type="signal peptide" evidence="1">
    <location>
        <begin position="1"/>
        <end position="19"/>
    </location>
</feature>
<feature type="chain" id="PRO_0000044576" description="Penicillin-insensitive murein endopeptidase">
    <location>
        <begin position="20"/>
        <end position="274"/>
    </location>
</feature>
<feature type="region of interest" description="Disordered" evidence="2">
    <location>
        <begin position="227"/>
        <end position="274"/>
    </location>
</feature>
<feature type="binding site" evidence="1">
    <location>
        <position position="110"/>
    </location>
    <ligand>
        <name>Zn(2+)</name>
        <dbReference type="ChEBI" id="CHEBI:29105"/>
        <label>1</label>
    </ligand>
</feature>
<feature type="binding site" evidence="1">
    <location>
        <position position="113"/>
    </location>
    <ligand>
        <name>Zn(2+)</name>
        <dbReference type="ChEBI" id="CHEBI:29105"/>
        <label>1</label>
    </ligand>
</feature>
<feature type="binding site" evidence="1">
    <location>
        <position position="120"/>
    </location>
    <ligand>
        <name>Zn(2+)</name>
        <dbReference type="ChEBI" id="CHEBI:29105"/>
        <label>1</label>
    </ligand>
</feature>
<feature type="binding site" evidence="1">
    <location>
        <position position="147"/>
    </location>
    <ligand>
        <name>Zn(2+)</name>
        <dbReference type="ChEBI" id="CHEBI:29105"/>
        <label>2</label>
    </ligand>
</feature>
<feature type="binding site" evidence="1">
    <location>
        <position position="150"/>
    </location>
    <ligand>
        <name>Zn(2+)</name>
        <dbReference type="ChEBI" id="CHEBI:29105"/>
        <label>2</label>
    </ligand>
</feature>
<feature type="binding site" evidence="1">
    <location>
        <position position="211"/>
    </location>
    <ligand>
        <name>Zn(2+)</name>
        <dbReference type="ChEBI" id="CHEBI:29105"/>
        <label>1</label>
    </ligand>
</feature>
<feature type="disulfide bond" evidence="1">
    <location>
        <begin position="44"/>
        <end position="265"/>
    </location>
</feature>
<feature type="disulfide bond" evidence="1">
    <location>
        <begin position="187"/>
        <end position="235"/>
    </location>
</feature>
<feature type="disulfide bond" evidence="1">
    <location>
        <begin position="216"/>
        <end position="223"/>
    </location>
</feature>
<keyword id="KW-1015">Disulfide bond</keyword>
<keyword id="KW-0378">Hydrolase</keyword>
<keyword id="KW-0479">Metal-binding</keyword>
<keyword id="KW-0482">Metalloprotease</keyword>
<keyword id="KW-0574">Periplasm</keyword>
<keyword id="KW-0645">Protease</keyword>
<keyword id="KW-1185">Reference proteome</keyword>
<keyword id="KW-0732">Signal</keyword>
<keyword id="KW-0862">Zinc</keyword>
<dbReference type="EC" id="3.4.24.-" evidence="1"/>
<dbReference type="EMBL" id="AE005174">
    <property type="protein sequence ID" value="AAG57457.1"/>
    <property type="molecule type" value="Genomic_DNA"/>
</dbReference>
<dbReference type="EMBL" id="BA000007">
    <property type="protein sequence ID" value="BAB36635.1"/>
    <property type="molecule type" value="Genomic_DNA"/>
</dbReference>
<dbReference type="PIR" id="D91030">
    <property type="entry name" value="D91030"/>
</dbReference>
<dbReference type="PIR" id="E85874">
    <property type="entry name" value="E85874"/>
</dbReference>
<dbReference type="RefSeq" id="NP_311239.1">
    <property type="nucleotide sequence ID" value="NC_002695.1"/>
</dbReference>
<dbReference type="RefSeq" id="WP_001043834.1">
    <property type="nucleotide sequence ID" value="NZ_VOAI01000001.1"/>
</dbReference>
<dbReference type="SMR" id="Q8XCQ5"/>
<dbReference type="STRING" id="155864.Z3591"/>
<dbReference type="MEROPS" id="M74.001"/>
<dbReference type="GeneID" id="915692"/>
<dbReference type="KEGG" id="ece:Z3591"/>
<dbReference type="KEGG" id="ecs:ECs_3212"/>
<dbReference type="PATRIC" id="fig|386585.9.peg.3353"/>
<dbReference type="eggNOG" id="COG3770">
    <property type="taxonomic scope" value="Bacteria"/>
</dbReference>
<dbReference type="HOGENOM" id="CLU_052496_0_0_6"/>
<dbReference type="OMA" id="VRPWWGH"/>
<dbReference type="Proteomes" id="UP000000558">
    <property type="component" value="Chromosome"/>
</dbReference>
<dbReference type="Proteomes" id="UP000002519">
    <property type="component" value="Chromosome"/>
</dbReference>
<dbReference type="GO" id="GO:0030288">
    <property type="term" value="C:outer membrane-bounded periplasmic space"/>
    <property type="evidence" value="ECO:0007669"/>
    <property type="project" value="InterPro"/>
</dbReference>
<dbReference type="GO" id="GO:0046872">
    <property type="term" value="F:metal ion binding"/>
    <property type="evidence" value="ECO:0007669"/>
    <property type="project" value="UniProtKB-KW"/>
</dbReference>
<dbReference type="GO" id="GO:0004222">
    <property type="term" value="F:metalloendopeptidase activity"/>
    <property type="evidence" value="ECO:0007669"/>
    <property type="project" value="UniProtKB-UniRule"/>
</dbReference>
<dbReference type="GO" id="GO:0004252">
    <property type="term" value="F:serine-type endopeptidase activity"/>
    <property type="evidence" value="ECO:0007669"/>
    <property type="project" value="InterPro"/>
</dbReference>
<dbReference type="GO" id="GO:0000270">
    <property type="term" value="P:peptidoglycan metabolic process"/>
    <property type="evidence" value="ECO:0007669"/>
    <property type="project" value="UniProtKB-UniRule"/>
</dbReference>
<dbReference type="GO" id="GO:0006508">
    <property type="term" value="P:proteolysis"/>
    <property type="evidence" value="ECO:0007669"/>
    <property type="project" value="UniProtKB-KW"/>
</dbReference>
<dbReference type="FunFam" id="3.30.1380.10:FF:000002">
    <property type="entry name" value="Penicillin-insensitive murein endopeptidase"/>
    <property type="match status" value="1"/>
</dbReference>
<dbReference type="Gene3D" id="3.30.1380.10">
    <property type="match status" value="1"/>
</dbReference>
<dbReference type="HAMAP" id="MF_01623">
    <property type="entry name" value="MepA"/>
    <property type="match status" value="1"/>
</dbReference>
<dbReference type="InterPro" id="IPR009045">
    <property type="entry name" value="Hedgehog_sig/DD-Pept_Zn-bd_sf"/>
</dbReference>
<dbReference type="InterPro" id="IPR005073">
    <property type="entry name" value="Peptidase_M74"/>
</dbReference>
<dbReference type="NCBIfam" id="NF006947">
    <property type="entry name" value="PRK09429.1"/>
    <property type="match status" value="1"/>
</dbReference>
<dbReference type="Pfam" id="PF03411">
    <property type="entry name" value="Peptidase_M74"/>
    <property type="match status" value="1"/>
</dbReference>
<dbReference type="PIRSF" id="PIRSF018455">
    <property type="entry name" value="MepA"/>
    <property type="match status" value="1"/>
</dbReference>
<dbReference type="SUPFAM" id="SSF55166">
    <property type="entry name" value="Hedgehog/DD-peptidase"/>
    <property type="match status" value="1"/>
</dbReference>
<name>MEPA_ECO57</name>
<proteinExistence type="inferred from homology"/>
<reference key="1">
    <citation type="journal article" date="2001" name="Nature">
        <title>Genome sequence of enterohaemorrhagic Escherichia coli O157:H7.</title>
        <authorList>
            <person name="Perna N.T."/>
            <person name="Plunkett G. III"/>
            <person name="Burland V."/>
            <person name="Mau B."/>
            <person name="Glasner J.D."/>
            <person name="Rose D.J."/>
            <person name="Mayhew G.F."/>
            <person name="Evans P.S."/>
            <person name="Gregor J."/>
            <person name="Kirkpatrick H.A."/>
            <person name="Posfai G."/>
            <person name="Hackett J."/>
            <person name="Klink S."/>
            <person name="Boutin A."/>
            <person name="Shao Y."/>
            <person name="Miller L."/>
            <person name="Grotbeck E.J."/>
            <person name="Davis N.W."/>
            <person name="Lim A."/>
            <person name="Dimalanta E.T."/>
            <person name="Potamousis K."/>
            <person name="Apodaca J."/>
            <person name="Anantharaman T.S."/>
            <person name="Lin J."/>
            <person name="Yen G."/>
            <person name="Schwartz D.C."/>
            <person name="Welch R.A."/>
            <person name="Blattner F.R."/>
        </authorList>
    </citation>
    <scope>NUCLEOTIDE SEQUENCE [LARGE SCALE GENOMIC DNA]</scope>
    <source>
        <strain>O157:H7 / EDL933 / ATCC 700927 / EHEC</strain>
    </source>
</reference>
<reference key="2">
    <citation type="journal article" date="2001" name="DNA Res.">
        <title>Complete genome sequence of enterohemorrhagic Escherichia coli O157:H7 and genomic comparison with a laboratory strain K-12.</title>
        <authorList>
            <person name="Hayashi T."/>
            <person name="Makino K."/>
            <person name="Ohnishi M."/>
            <person name="Kurokawa K."/>
            <person name="Ishii K."/>
            <person name="Yokoyama K."/>
            <person name="Han C.-G."/>
            <person name="Ohtsubo E."/>
            <person name="Nakayama K."/>
            <person name="Murata T."/>
            <person name="Tanaka M."/>
            <person name="Tobe T."/>
            <person name="Iida T."/>
            <person name="Takami H."/>
            <person name="Honda T."/>
            <person name="Sasakawa C."/>
            <person name="Ogasawara N."/>
            <person name="Yasunaga T."/>
            <person name="Kuhara S."/>
            <person name="Shiba T."/>
            <person name="Hattori M."/>
            <person name="Shinagawa H."/>
        </authorList>
    </citation>
    <scope>NUCLEOTIDE SEQUENCE [LARGE SCALE GENOMIC DNA]</scope>
    <source>
        <strain>O157:H7 / Sakai / RIMD 0509952 / EHEC</strain>
    </source>
</reference>